<keyword id="KW-0413">Isomerase</keyword>
<keyword id="KW-0658">Purine biosynthesis</keyword>
<keyword id="KW-1185">Reference proteome</keyword>
<feature type="chain" id="PRO_0000074990" description="N5-carboxyaminoimidazole ribonucleotide mutase">
    <location>
        <begin position="1"/>
        <end position="158"/>
    </location>
</feature>
<feature type="binding site" evidence="1">
    <location>
        <position position="10"/>
    </location>
    <ligand>
        <name>substrate</name>
    </ligand>
</feature>
<feature type="binding site" evidence="1">
    <location>
        <position position="13"/>
    </location>
    <ligand>
        <name>substrate</name>
    </ligand>
</feature>
<feature type="binding site" evidence="1">
    <location>
        <position position="40"/>
    </location>
    <ligand>
        <name>substrate</name>
    </ligand>
</feature>
<organism>
    <name type="scientific">Saccharolobus solfataricus (strain ATCC 35092 / DSM 1617 / JCM 11322 / P2)</name>
    <name type="common">Sulfolobus solfataricus</name>
    <dbReference type="NCBI Taxonomy" id="273057"/>
    <lineage>
        <taxon>Archaea</taxon>
        <taxon>Thermoproteota</taxon>
        <taxon>Thermoprotei</taxon>
        <taxon>Sulfolobales</taxon>
        <taxon>Sulfolobaceae</taxon>
        <taxon>Saccharolobus</taxon>
    </lineage>
</organism>
<evidence type="ECO:0000255" key="1">
    <source>
        <dbReference type="HAMAP-Rule" id="MF_01929"/>
    </source>
</evidence>
<protein>
    <recommendedName>
        <fullName evidence="1">N5-carboxyaminoimidazole ribonucleotide mutase</fullName>
        <shortName evidence="1">N5-CAIR mutase</shortName>
        <ecNumber evidence="1">5.4.99.18</ecNumber>
    </recommendedName>
    <alternativeName>
        <fullName evidence="1">5-(carboxyamino)imidazole ribonucleotide mutase</fullName>
    </alternativeName>
</protein>
<dbReference type="EC" id="5.4.99.18" evidence="1"/>
<dbReference type="EMBL" id="Y13143">
    <property type="protein sequence ID" value="CAA73604.1"/>
    <property type="molecule type" value="Genomic_DNA"/>
</dbReference>
<dbReference type="EMBL" id="AE006641">
    <property type="protein sequence ID" value="AAK41327.1"/>
    <property type="molecule type" value="Genomic_DNA"/>
</dbReference>
<dbReference type="PIR" id="H90258">
    <property type="entry name" value="H90258"/>
</dbReference>
<dbReference type="RefSeq" id="WP_009989885.1">
    <property type="nucleotide sequence ID" value="NC_002754.1"/>
</dbReference>
<dbReference type="SMR" id="O06456"/>
<dbReference type="FunCoup" id="O06456">
    <property type="interactions" value="5"/>
</dbReference>
<dbReference type="STRING" id="273057.SSO1064"/>
<dbReference type="PaxDb" id="273057-SSO1064"/>
<dbReference type="EnsemblBacteria" id="AAK41327">
    <property type="protein sequence ID" value="AAK41327"/>
    <property type="gene ID" value="SSO1064"/>
</dbReference>
<dbReference type="GeneID" id="44129998"/>
<dbReference type="KEGG" id="sso:SSO1064"/>
<dbReference type="PATRIC" id="fig|273057.12.peg.1061"/>
<dbReference type="eggNOG" id="arCOG02464">
    <property type="taxonomic scope" value="Archaea"/>
</dbReference>
<dbReference type="HOGENOM" id="CLU_094982_2_0_2"/>
<dbReference type="InParanoid" id="O06456"/>
<dbReference type="PhylomeDB" id="O06456"/>
<dbReference type="UniPathway" id="UPA00074">
    <property type="reaction ID" value="UER00943"/>
</dbReference>
<dbReference type="Proteomes" id="UP000001974">
    <property type="component" value="Chromosome"/>
</dbReference>
<dbReference type="GO" id="GO:0034023">
    <property type="term" value="F:5-(carboxyamino)imidazole ribonucleotide mutase activity"/>
    <property type="evidence" value="ECO:0007669"/>
    <property type="project" value="UniProtKB-UniRule"/>
</dbReference>
<dbReference type="GO" id="GO:0006189">
    <property type="term" value="P:'de novo' IMP biosynthetic process"/>
    <property type="evidence" value="ECO:0007669"/>
    <property type="project" value="UniProtKB-UniRule"/>
</dbReference>
<dbReference type="Gene3D" id="3.40.50.1970">
    <property type="match status" value="1"/>
</dbReference>
<dbReference type="HAMAP" id="MF_01929">
    <property type="entry name" value="PurE_classI"/>
    <property type="match status" value="1"/>
</dbReference>
<dbReference type="InterPro" id="IPR033747">
    <property type="entry name" value="PurE_ClassI"/>
</dbReference>
<dbReference type="InterPro" id="IPR000031">
    <property type="entry name" value="PurE_dom"/>
</dbReference>
<dbReference type="InterPro" id="IPR024694">
    <property type="entry name" value="PurE_prokaryotes"/>
</dbReference>
<dbReference type="NCBIfam" id="TIGR01162">
    <property type="entry name" value="purE"/>
    <property type="match status" value="1"/>
</dbReference>
<dbReference type="PANTHER" id="PTHR23046:SF2">
    <property type="entry name" value="PHOSPHORIBOSYLAMINOIMIDAZOLE CARBOXYLASE"/>
    <property type="match status" value="1"/>
</dbReference>
<dbReference type="PANTHER" id="PTHR23046">
    <property type="entry name" value="PHOSPHORIBOSYLAMINOIMIDAZOLE CARBOXYLASE CATALYTIC SUBUNIT"/>
    <property type="match status" value="1"/>
</dbReference>
<dbReference type="Pfam" id="PF00731">
    <property type="entry name" value="AIRC"/>
    <property type="match status" value="1"/>
</dbReference>
<dbReference type="PIRSF" id="PIRSF001338">
    <property type="entry name" value="AIR_carboxylase"/>
    <property type="match status" value="1"/>
</dbReference>
<dbReference type="SMART" id="SM01001">
    <property type="entry name" value="AIRC"/>
    <property type="match status" value="1"/>
</dbReference>
<dbReference type="SUPFAM" id="SSF52255">
    <property type="entry name" value="N5-CAIR mutase (phosphoribosylaminoimidazole carboxylase, PurE)"/>
    <property type="match status" value="1"/>
</dbReference>
<gene>
    <name evidence="1" type="primary">purE</name>
    <name type="ordered locus">SSO1064</name>
</gene>
<accession>O06456</accession>
<sequence>MPKVAVIMGSKNDWEYMREAVEILKQFGIDYEARVVSAHRTPEFMMQYAKEAEKRGIEVIIAGAGGAAHLPGMVASLTSLPVIGVPIPSKNLNGLDSLLSIVQMPYGVPVATVAIGGAKNAALLAIRILGIKYKELADKIKKFSEDMRNDVLSTRLEA</sequence>
<reference key="1">
    <citation type="journal article" date="1997" name="FEMS Microbiol. Lett.">
        <title>Identification and sequence analysis of Sulfolobus solfataricus purE and purK genes.</title>
        <authorList>
            <person name="Soerensen I.S."/>
            <person name="Dandanell G."/>
        </authorList>
    </citation>
    <scope>NUCLEOTIDE SEQUENCE [GENOMIC DNA]</scope>
    <source>
        <strain>ATCC 35092 / DSM 1617 / JCM 11322 / P2</strain>
    </source>
</reference>
<reference key="2">
    <citation type="journal article" date="2001" name="Proc. Natl. Acad. Sci. U.S.A.">
        <title>The complete genome of the crenarchaeon Sulfolobus solfataricus P2.</title>
        <authorList>
            <person name="She Q."/>
            <person name="Singh R.K."/>
            <person name="Confalonieri F."/>
            <person name="Zivanovic Y."/>
            <person name="Allard G."/>
            <person name="Awayez M.J."/>
            <person name="Chan-Weiher C.C.-Y."/>
            <person name="Clausen I.G."/>
            <person name="Curtis B.A."/>
            <person name="De Moors A."/>
            <person name="Erauso G."/>
            <person name="Fletcher C."/>
            <person name="Gordon P.M.K."/>
            <person name="Heikamp-de Jong I."/>
            <person name="Jeffries A.C."/>
            <person name="Kozera C.J."/>
            <person name="Medina N."/>
            <person name="Peng X."/>
            <person name="Thi-Ngoc H.P."/>
            <person name="Redder P."/>
            <person name="Schenk M.E."/>
            <person name="Theriault C."/>
            <person name="Tolstrup N."/>
            <person name="Charlebois R.L."/>
            <person name="Doolittle W.F."/>
            <person name="Duguet M."/>
            <person name="Gaasterland T."/>
            <person name="Garrett R.A."/>
            <person name="Ragan M.A."/>
            <person name="Sensen C.W."/>
            <person name="Van der Oost J."/>
        </authorList>
    </citation>
    <scope>NUCLEOTIDE SEQUENCE [LARGE SCALE GENOMIC DNA]</scope>
    <source>
        <strain>ATCC 35092 / DSM 1617 / JCM 11322 / P2</strain>
    </source>
</reference>
<name>PURE_SACS2</name>
<comment type="function">
    <text evidence="1">Catalyzes the conversion of N5-carboxyaminoimidazole ribonucleotide (N5-CAIR) to 4-carboxy-5-aminoimidazole ribonucleotide (CAIR).</text>
</comment>
<comment type="catalytic activity">
    <reaction evidence="1">
        <text>5-carboxyamino-1-(5-phospho-D-ribosyl)imidazole + H(+) = 5-amino-1-(5-phospho-D-ribosyl)imidazole-4-carboxylate</text>
        <dbReference type="Rhea" id="RHEA:13193"/>
        <dbReference type="ChEBI" id="CHEBI:15378"/>
        <dbReference type="ChEBI" id="CHEBI:58730"/>
        <dbReference type="ChEBI" id="CHEBI:77657"/>
        <dbReference type="EC" id="5.4.99.18"/>
    </reaction>
</comment>
<comment type="pathway">
    <text evidence="1">Purine metabolism; IMP biosynthesis via de novo pathway; 5-amino-1-(5-phospho-D-ribosyl)imidazole-4-carboxylate from 5-amino-1-(5-phospho-D-ribosyl)imidazole (N5-CAIR route): step 2/2.</text>
</comment>
<comment type="similarity">
    <text evidence="1">Belongs to the AIR carboxylase family. Class I subfamily.</text>
</comment>
<proteinExistence type="inferred from homology"/>